<accession>M9MF51</accession>
<organism>
    <name type="scientific">Pseudozyma antarctica (strain T-34)</name>
    <name type="common">Yeast</name>
    <name type="synonym">Candida antarctica</name>
    <dbReference type="NCBI Taxonomy" id="1151754"/>
    <lineage>
        <taxon>Eukaryota</taxon>
        <taxon>Fungi</taxon>
        <taxon>Dikarya</taxon>
        <taxon>Basidiomycota</taxon>
        <taxon>Ustilaginomycotina</taxon>
        <taxon>Ustilaginomycetes</taxon>
        <taxon>Ustilaginales</taxon>
        <taxon>Ustilaginaceae</taxon>
        <taxon>Moesziomyces</taxon>
    </lineage>
</organism>
<evidence type="ECO:0000250" key="1">
    <source>
        <dbReference type="UniProtKB" id="A0A0D1CRD0"/>
    </source>
</evidence>
<evidence type="ECO:0000269" key="2">
    <source>
    </source>
</evidence>
<evidence type="ECO:0000269" key="3">
    <source>
    </source>
</evidence>
<evidence type="ECO:0000269" key="4">
    <source>
    </source>
</evidence>
<evidence type="ECO:0000269" key="5">
    <source>
    </source>
</evidence>
<evidence type="ECO:0000269" key="6">
    <source>
    </source>
</evidence>
<evidence type="ECO:0000269" key="7">
    <source>
    </source>
</evidence>
<evidence type="ECO:0000269" key="8">
    <source ref="6"/>
</evidence>
<evidence type="ECO:0000303" key="9">
    <source>
    </source>
</evidence>
<evidence type="ECO:0000303" key="10">
    <source>
    </source>
</evidence>
<evidence type="ECO:0000305" key="11"/>
<evidence type="ECO:0000305" key="12">
    <source>
    </source>
</evidence>
<evidence type="ECO:0000305" key="13">
    <source>
    </source>
</evidence>
<name>MAC2_PSEA3</name>
<proteinExistence type="evidence at protein level"/>
<sequence length="550" mass="59857">MTTEDNQRWSQVSPDLAKRPLVGVEKVLNYTEYYQNGNFQLTIALLFETSVASETLCERFPLALWSVRSKLPELGTSTVSNDQSAELDLDHALWQPIRSLEQAQQWLDDTGVIVNDGTSVQQMVDRLSNRRIEPIGKQFRVYLVCDPLYGAPGLIVNASHVLNGHRALFQGESIFKALLSPRISDATRQNPDAKAALAAIFKPEELNEALPKLPQSLNTAYADKFQPGAPEIEAGFHKVGEKLSNGAQPSIGIPRFQIPSAKPAFSLGSLDGTPMSMLNLRSRINAADNQSLKRACKKYGASVPSLVYACIVNSIDRHCGSSSSEAVLGANLAYSAHASRWMPAETFEERSPVNMAIVLGSGYLSPEELQPGQRGRNLGEAGLFALARTIRKKQDDFLDTPHIIGAMSDLGEQVSSQLAEVAERQREAGTDARVALSENSPLVCPPTLTSQGVITVKRFYTAQGASDELHLEQPADEHLEFFDICTGGRTTDASVCFAMFTHVGALTLQAHFDSHFFDAQLVRNILDDVVSQLGSAAASASLTSQDQAKL</sequence>
<comment type="function">
    <text evidence="1 6 7 12 13">Acyl-CoA-dependent acyltransferase; part of the gene cluster that mediates the biosynthesis of mannosylerythritol lipids (MELs), surface-active substances that enhance the availability of water-insoluble substrates (Probable) (PubMed:20564650, PubMed:31923270). Depending on the number of acetyl groups, mannosylerythritol lipids can be differentiated into MEL A (fully acetylated), MEL B and MEL C (monoacetylated at R-6 and R-4, respectively), and the fully deacetylated MEL D (By similarity). The first step in the pathway is the generation of mannosylerythritol by the glycosyltransferase EMT1 which catalyzes the transfer of GDP-mannose to the C-4 atom of meso-erythritol (Probable). This reaction has to be stereospecific, since only mannosyl-D-erythritol is generated (Probable). The produced disaccharide is subsequently acylated with fatty acids of various lengths by the acyltransferases MAC1 and MAC2 at positions C-2 and C-3, repectively (Probable). The existence of MEL derivatives which carry an acetyl group at C-2 implies that at least MAC1 also accepts acetyl-CoA as a donor (Probable). The final step of MEL biosynthesis is the acetylation of the fully acylated mannosylerythritol lipids catalyzed by the acetyl-CoA-dependent acetyltransferase MAT1 (Probable). MAT1 displays a relaxed regioselectivity and is able to transfer acetylgroups to both positions C-4 and C-6 of the mannosyl moiety (Probable).</text>
</comment>
<comment type="pathway">
    <text evidence="13">Secondary metabolite biosynthesis.</text>
</comment>
<comment type="induction">
    <text evidence="7">Expression is induced when cells are grown in cultures containing vegetable oil as the carbon source.</text>
</comment>
<comment type="biotechnology">
    <text evidence="2 3 4 5 8">MELs not only have high potential as eco-friendly biosurfactants due to their excellent surface activity, but also have attracted considerable recent interest because of thei runique properties, including self-assembly, anti-tumor and cell differentiation induction activities, and moisturizing and hair-repairing properties.</text>
</comment>
<comment type="similarity">
    <text evidence="11">Belongs to the trichothecene O-acetyltransferase family.</text>
</comment>
<keyword id="KW-0012">Acyltransferase</keyword>
<keyword id="KW-1185">Reference proteome</keyword>
<keyword id="KW-0808">Transferase</keyword>
<reference key="1">
    <citation type="journal article" date="2013" name="Genome Announc.">
        <title>Genome sequence of the basidiomycetous yeast Pseudozyma antarctica T-34, a producer of the glycolipid biosurfactants mannosylerythritol lipids.</title>
        <authorList>
            <person name="Morita T."/>
            <person name="Koike H."/>
            <person name="Koyama Y."/>
            <person name="Hagiwara H."/>
            <person name="Ito E."/>
            <person name="Fukuoka T."/>
            <person name="Imura T."/>
            <person name="Machida M."/>
            <person name="Kitamoto D."/>
        </authorList>
    </citation>
    <scope>NUCLEOTIDE SEQUENCE [LARGE SCALE GENOMIC DNA]</scope>
    <scope>IDENTIFICATION</scope>
    <scope>FUNCTION</scope>
    <source>
        <strain>T-34</strain>
    </source>
</reference>
<reference key="2">
    <citation type="journal article" date="2002" name="J. Biosci. Bioeng.">
        <title>Functions and potential applications of glycolipid biosurfactants--from energy-saving materials to gene delivery carriers.</title>
        <authorList>
            <person name="Kitamoto D."/>
            <person name="Isoda H."/>
            <person name="Nakahara T."/>
        </authorList>
    </citation>
    <scope>BIOTECHNOLOGY</scope>
</reference>
<reference key="3">
    <citation type="journal article" date="2007" name="Colloids Surf. B Biointerfaces">
        <title>Kinetic studies on the interactions between glycolipid biosurfactant assembled monolayers and various classes of immunoglobulins using surface plasmon resonance.</title>
        <authorList>
            <person name="Ito S."/>
            <person name="Imura T."/>
            <person name="Fukuoka T."/>
            <person name="Morita T."/>
            <person name="Sakai H."/>
            <person name="Abe M."/>
            <person name="Kitamoto D."/>
        </authorList>
    </citation>
    <scope>BIOTECHNOLOGY</scope>
</reference>
<reference key="4">
    <citation type="journal article" date="2007" name="Langmuir">
        <title>Aqueous-phase behavior of natural glycolipid biosurfactant mannosylerythritol lipid A: sponge, cubic, and lamellar phases.</title>
        <authorList>
            <person name="Imura T."/>
            <person name="Hikosaka Y."/>
            <person name="Worakitkanchanakul W."/>
            <person name="Sakai H."/>
            <person name="Abe M."/>
            <person name="Konishi M."/>
            <person name="Minamikawa H."/>
            <person name="Kitamoto D."/>
        </authorList>
    </citation>
    <scope>BIOTECHNOLOGY</scope>
</reference>
<reference key="5">
    <citation type="journal article" date="2009" name="Biotechnol. Appl. Biochem.">
        <title>Production of glycolipid biosurfactants by basidiomycetous yeasts.</title>
        <authorList>
            <person name="Morita T."/>
            <person name="Fukuoka T."/>
            <person name="Imura T."/>
            <person name="Kitamoto D."/>
        </authorList>
    </citation>
    <scope>BIOTECHNOLOGY</scope>
</reference>
<reference key="6">
    <citation type="journal article" date="2009" name="Curr. Opin. Colloid Interface Sci.">
        <title>Self-assembling properties of glycolipid biosurfactants and their potential applications.</title>
        <authorList>
            <person name="Kitamoto D."/>
            <person name="Morita T."/>
            <person name="Fukuoka T."/>
            <person name="Konishi M."/>
            <person name="Imura T."/>
        </authorList>
    </citation>
    <scope>BIOTECHNOLOGY</scope>
</reference>
<reference key="7">
    <citation type="journal article" date="2010" name="Yeast">
        <title>Identification of the gene PaEMT1 for biosynthesis of mannosylerythritol lipids in the basidiomycetous yeast Pseudozyma antarctica.</title>
        <authorList>
            <person name="Morita T."/>
            <person name="Ito E."/>
            <person name="Kitamoto H.K."/>
            <person name="Takegawa K."/>
            <person name="Fukuoka T."/>
            <person name="Imura T."/>
            <person name="Kitamoto D."/>
        </authorList>
    </citation>
    <scope>FUNCTION</scope>
</reference>
<reference key="8">
    <citation type="journal article" date="2020" name="PLoS ONE">
        <title>Targeted transcriptomic study of the implication of central metabolic pathways in mannosylerythritol lipids biosynthesis in Pseudozyma antarctica T-34.</title>
        <authorList>
            <person name="Wada K."/>
            <person name="Koike H."/>
            <person name="Fujii T."/>
            <person name="Morita T."/>
        </authorList>
    </citation>
    <scope>FUNCTION</scope>
    <scope>PATHWAY</scope>
</reference>
<feature type="chain" id="PRO_0000449537" description="Acyl-CoA-dependent acyltransferase MAC2">
    <location>
        <begin position="1"/>
        <end position="550"/>
    </location>
</feature>
<gene>
    <name evidence="9" type="primary">MAC2</name>
    <name type="ORF">PANT_19d00002</name>
</gene>
<dbReference type="EC" id="2.-.-.-" evidence="1"/>
<dbReference type="EMBL" id="DF196785">
    <property type="protein sequence ID" value="GAC75888.1"/>
    <property type="molecule type" value="Genomic_DNA"/>
</dbReference>
<dbReference type="SMR" id="M9MF51"/>
<dbReference type="OrthoDB" id="1377at5257"/>
<dbReference type="Proteomes" id="UP000011976">
    <property type="component" value="Unassembled WGS sequence"/>
</dbReference>
<dbReference type="GO" id="GO:0016746">
    <property type="term" value="F:acyltransferase activity"/>
    <property type="evidence" value="ECO:0007669"/>
    <property type="project" value="UniProtKB-KW"/>
</dbReference>
<dbReference type="Gene3D" id="3.30.559.10">
    <property type="entry name" value="Chloramphenicol acetyltransferase-like domain"/>
    <property type="match status" value="1"/>
</dbReference>
<dbReference type="InterPro" id="IPR023213">
    <property type="entry name" value="CAT-like_dom_sf"/>
</dbReference>
<dbReference type="PANTHER" id="PTHR42034:SF3">
    <property type="entry name" value="ACYL-COA-DEPENDENT ACYLTRANSFERASE MAC2"/>
    <property type="match status" value="1"/>
</dbReference>
<dbReference type="PANTHER" id="PTHR42034">
    <property type="entry name" value="CHROMOSOME 7, WHOLE GENOME SHOTGUN SEQUENCE-RELATED"/>
    <property type="match status" value="1"/>
</dbReference>
<protein>
    <recommendedName>
        <fullName evidence="9">Acyl-CoA-dependent acyltransferase MAC2</fullName>
        <ecNumber evidence="1">2.-.-.-</ecNumber>
    </recommendedName>
    <alternativeName>
        <fullName evidence="10">Mannosylerythritol lipids (MELs) biosynthesis cluster protein MAC2</fullName>
    </alternativeName>
</protein>